<keyword id="KW-0004">4Fe-4S</keyword>
<keyword id="KW-0997">Cell inner membrane</keyword>
<keyword id="KW-1003">Cell membrane</keyword>
<keyword id="KW-0408">Iron</keyword>
<keyword id="KW-0411">Iron-sulfur</keyword>
<keyword id="KW-0472">Membrane</keyword>
<keyword id="KW-0479">Metal-binding</keyword>
<keyword id="KW-0520">NAD</keyword>
<keyword id="KW-0874">Quinone</keyword>
<keyword id="KW-1278">Translocase</keyword>
<keyword id="KW-0813">Transport</keyword>
<keyword id="KW-0830">Ubiquinone</keyword>
<gene>
    <name evidence="1" type="primary">nuoB</name>
    <name type="ordered locus">PXO_01288</name>
</gene>
<dbReference type="EC" id="7.1.1.-" evidence="1"/>
<dbReference type="EMBL" id="CP000967">
    <property type="protein sequence ID" value="ACD60092.1"/>
    <property type="molecule type" value="Genomic_DNA"/>
</dbReference>
<dbReference type="SMR" id="B2SVL8"/>
<dbReference type="KEGG" id="xop:PXO_01288"/>
<dbReference type="eggNOG" id="COG0377">
    <property type="taxonomic scope" value="Bacteria"/>
</dbReference>
<dbReference type="HOGENOM" id="CLU_055737_7_0_6"/>
<dbReference type="Proteomes" id="UP000001740">
    <property type="component" value="Chromosome"/>
</dbReference>
<dbReference type="GO" id="GO:0005886">
    <property type="term" value="C:plasma membrane"/>
    <property type="evidence" value="ECO:0007669"/>
    <property type="project" value="UniProtKB-SubCell"/>
</dbReference>
<dbReference type="GO" id="GO:0045271">
    <property type="term" value="C:respiratory chain complex I"/>
    <property type="evidence" value="ECO:0007669"/>
    <property type="project" value="TreeGrafter"/>
</dbReference>
<dbReference type="GO" id="GO:0051539">
    <property type="term" value="F:4 iron, 4 sulfur cluster binding"/>
    <property type="evidence" value="ECO:0007669"/>
    <property type="project" value="UniProtKB-KW"/>
</dbReference>
<dbReference type="GO" id="GO:0005506">
    <property type="term" value="F:iron ion binding"/>
    <property type="evidence" value="ECO:0007669"/>
    <property type="project" value="UniProtKB-UniRule"/>
</dbReference>
<dbReference type="GO" id="GO:0008137">
    <property type="term" value="F:NADH dehydrogenase (ubiquinone) activity"/>
    <property type="evidence" value="ECO:0007669"/>
    <property type="project" value="InterPro"/>
</dbReference>
<dbReference type="GO" id="GO:0050136">
    <property type="term" value="F:NADH:ubiquinone reductase (non-electrogenic) activity"/>
    <property type="evidence" value="ECO:0007669"/>
    <property type="project" value="UniProtKB-UniRule"/>
</dbReference>
<dbReference type="GO" id="GO:0048038">
    <property type="term" value="F:quinone binding"/>
    <property type="evidence" value="ECO:0007669"/>
    <property type="project" value="UniProtKB-KW"/>
</dbReference>
<dbReference type="GO" id="GO:0009060">
    <property type="term" value="P:aerobic respiration"/>
    <property type="evidence" value="ECO:0007669"/>
    <property type="project" value="TreeGrafter"/>
</dbReference>
<dbReference type="GO" id="GO:0015990">
    <property type="term" value="P:electron transport coupled proton transport"/>
    <property type="evidence" value="ECO:0007669"/>
    <property type="project" value="TreeGrafter"/>
</dbReference>
<dbReference type="FunFam" id="3.40.50.12280:FF:000001">
    <property type="entry name" value="NADH-quinone oxidoreductase subunit B 2"/>
    <property type="match status" value="1"/>
</dbReference>
<dbReference type="Gene3D" id="3.40.50.12280">
    <property type="match status" value="1"/>
</dbReference>
<dbReference type="HAMAP" id="MF_01356">
    <property type="entry name" value="NDH1_NuoB"/>
    <property type="match status" value="1"/>
</dbReference>
<dbReference type="InterPro" id="IPR006137">
    <property type="entry name" value="NADH_UbQ_OxRdtase-like_20kDa"/>
</dbReference>
<dbReference type="InterPro" id="IPR006138">
    <property type="entry name" value="NADH_UQ_OxRdtase_20Kd_su"/>
</dbReference>
<dbReference type="NCBIfam" id="TIGR01957">
    <property type="entry name" value="nuoB_fam"/>
    <property type="match status" value="1"/>
</dbReference>
<dbReference type="NCBIfam" id="NF005012">
    <property type="entry name" value="PRK06411.1"/>
    <property type="match status" value="1"/>
</dbReference>
<dbReference type="PANTHER" id="PTHR11995">
    <property type="entry name" value="NADH DEHYDROGENASE"/>
    <property type="match status" value="1"/>
</dbReference>
<dbReference type="PANTHER" id="PTHR11995:SF14">
    <property type="entry name" value="NADH DEHYDROGENASE [UBIQUINONE] IRON-SULFUR PROTEIN 7, MITOCHONDRIAL"/>
    <property type="match status" value="1"/>
</dbReference>
<dbReference type="Pfam" id="PF01058">
    <property type="entry name" value="Oxidored_q6"/>
    <property type="match status" value="1"/>
</dbReference>
<dbReference type="SUPFAM" id="SSF56770">
    <property type="entry name" value="HydA/Nqo6-like"/>
    <property type="match status" value="1"/>
</dbReference>
<dbReference type="PROSITE" id="PS01150">
    <property type="entry name" value="COMPLEX1_20K"/>
    <property type="match status" value="1"/>
</dbReference>
<protein>
    <recommendedName>
        <fullName evidence="1">NADH-quinone oxidoreductase subunit B</fullName>
        <ecNumber evidence="1">7.1.1.-</ecNumber>
    </recommendedName>
    <alternativeName>
        <fullName evidence="1">NADH dehydrogenase I subunit B</fullName>
    </alternativeName>
    <alternativeName>
        <fullName evidence="1">NDH-1 subunit B</fullName>
    </alternativeName>
</protein>
<sequence>MIQTLDRLMTNPMPEGRVEDILRPEGENPLLEKGYVTTSVDALLNWARTGSMWPMTFGLACCAVEMMHAGASRLDLDRYGVVFRPSPRQSDVMIVAGTLVNKMAPALRKVYDQMPDPKWVISMGSCANGGGYYHYSYSVVRGCDRIVPVDIYVPGCPPTAEALVYGILQLQKKIWRTQTIAR</sequence>
<organism>
    <name type="scientific">Xanthomonas oryzae pv. oryzae (strain PXO99A)</name>
    <dbReference type="NCBI Taxonomy" id="360094"/>
    <lineage>
        <taxon>Bacteria</taxon>
        <taxon>Pseudomonadati</taxon>
        <taxon>Pseudomonadota</taxon>
        <taxon>Gammaproteobacteria</taxon>
        <taxon>Lysobacterales</taxon>
        <taxon>Lysobacteraceae</taxon>
        <taxon>Xanthomonas</taxon>
    </lineage>
</organism>
<name>NUOB_XANOP</name>
<reference key="1">
    <citation type="journal article" date="2008" name="BMC Genomics">
        <title>Genome sequence and rapid evolution of the rice pathogen Xanthomonas oryzae pv. oryzae PXO99A.</title>
        <authorList>
            <person name="Salzberg S.L."/>
            <person name="Sommer D.D."/>
            <person name="Schatz M.C."/>
            <person name="Phillippy A.M."/>
            <person name="Rabinowicz P.D."/>
            <person name="Tsuge S."/>
            <person name="Furutani A."/>
            <person name="Ochiai H."/>
            <person name="Delcher A.L."/>
            <person name="Kelley D."/>
            <person name="Madupu R."/>
            <person name="Puiu D."/>
            <person name="Radune D."/>
            <person name="Shumway M."/>
            <person name="Trapnell C."/>
            <person name="Aparna G."/>
            <person name="Jha G."/>
            <person name="Pandey A."/>
            <person name="Patil P.B."/>
            <person name="Ishihara H."/>
            <person name="Meyer D.F."/>
            <person name="Szurek B."/>
            <person name="Verdier V."/>
            <person name="Koebnik R."/>
            <person name="Dow J.M."/>
            <person name="Ryan R.P."/>
            <person name="Hirata H."/>
            <person name="Tsuyumu S."/>
            <person name="Won Lee S."/>
            <person name="Seo Y.-S."/>
            <person name="Sriariyanum M."/>
            <person name="Ronald P.C."/>
            <person name="Sonti R.V."/>
            <person name="Van Sluys M.-A."/>
            <person name="Leach J.E."/>
            <person name="White F.F."/>
            <person name="Bogdanove A.J."/>
        </authorList>
    </citation>
    <scope>NUCLEOTIDE SEQUENCE [LARGE SCALE GENOMIC DNA]</scope>
    <source>
        <strain>PXO99A</strain>
    </source>
</reference>
<comment type="function">
    <text evidence="1">NDH-1 shuttles electrons from NADH, via FMN and iron-sulfur (Fe-S) centers, to quinones in the respiratory chain. The immediate electron acceptor for the enzyme in this species is believed to be ubiquinone. Couples the redox reaction to proton translocation (for every two electrons transferred, four hydrogen ions are translocated across the cytoplasmic membrane), and thus conserves the redox energy in a proton gradient.</text>
</comment>
<comment type="catalytic activity">
    <reaction evidence="1">
        <text>a quinone + NADH + 5 H(+)(in) = a quinol + NAD(+) + 4 H(+)(out)</text>
        <dbReference type="Rhea" id="RHEA:57888"/>
        <dbReference type="ChEBI" id="CHEBI:15378"/>
        <dbReference type="ChEBI" id="CHEBI:24646"/>
        <dbReference type="ChEBI" id="CHEBI:57540"/>
        <dbReference type="ChEBI" id="CHEBI:57945"/>
        <dbReference type="ChEBI" id="CHEBI:132124"/>
    </reaction>
</comment>
<comment type="cofactor">
    <cofactor evidence="1">
        <name>[4Fe-4S] cluster</name>
        <dbReference type="ChEBI" id="CHEBI:49883"/>
    </cofactor>
    <text evidence="1">Binds 1 [4Fe-4S] cluster.</text>
</comment>
<comment type="subunit">
    <text evidence="1">NDH-1 is composed of 14 different subunits. Subunits NuoB, C, D, E, F, and G constitute the peripheral sector of the complex.</text>
</comment>
<comment type="subcellular location">
    <subcellularLocation>
        <location evidence="1">Cell inner membrane</location>
        <topology evidence="1">Peripheral membrane protein</topology>
        <orientation evidence="1">Cytoplasmic side</orientation>
    </subcellularLocation>
</comment>
<comment type="similarity">
    <text evidence="1">Belongs to the complex I 20 kDa subunit family.</text>
</comment>
<evidence type="ECO:0000255" key="1">
    <source>
        <dbReference type="HAMAP-Rule" id="MF_01356"/>
    </source>
</evidence>
<accession>B2SVL8</accession>
<proteinExistence type="inferred from homology"/>
<feature type="chain" id="PRO_0000376406" description="NADH-quinone oxidoreductase subunit B">
    <location>
        <begin position="1"/>
        <end position="182"/>
    </location>
</feature>
<feature type="binding site" evidence="1">
    <location>
        <position position="61"/>
    </location>
    <ligand>
        <name>[4Fe-4S] cluster</name>
        <dbReference type="ChEBI" id="CHEBI:49883"/>
    </ligand>
</feature>
<feature type="binding site" evidence="1">
    <location>
        <position position="62"/>
    </location>
    <ligand>
        <name>[4Fe-4S] cluster</name>
        <dbReference type="ChEBI" id="CHEBI:49883"/>
    </ligand>
</feature>
<feature type="binding site" evidence="1">
    <location>
        <position position="126"/>
    </location>
    <ligand>
        <name>[4Fe-4S] cluster</name>
        <dbReference type="ChEBI" id="CHEBI:49883"/>
    </ligand>
</feature>
<feature type="binding site" evidence="1">
    <location>
        <position position="156"/>
    </location>
    <ligand>
        <name>[4Fe-4S] cluster</name>
        <dbReference type="ChEBI" id="CHEBI:49883"/>
    </ligand>
</feature>